<dbReference type="EMBL" id="BA000037">
    <property type="protein sequence ID" value="BAC93582.1"/>
    <property type="molecule type" value="Genomic_DNA"/>
</dbReference>
<dbReference type="RefSeq" id="WP_011078466.1">
    <property type="nucleotide sequence ID" value="NC_005139.1"/>
</dbReference>
<dbReference type="SMR" id="Q7MN99"/>
<dbReference type="STRING" id="672.VV93_v1c07590"/>
<dbReference type="KEGG" id="vvy:VV0818"/>
<dbReference type="eggNOG" id="COG0691">
    <property type="taxonomic scope" value="Bacteria"/>
</dbReference>
<dbReference type="HOGENOM" id="CLU_108953_3_0_6"/>
<dbReference type="Proteomes" id="UP000002675">
    <property type="component" value="Chromosome I"/>
</dbReference>
<dbReference type="GO" id="GO:0005829">
    <property type="term" value="C:cytosol"/>
    <property type="evidence" value="ECO:0007669"/>
    <property type="project" value="TreeGrafter"/>
</dbReference>
<dbReference type="GO" id="GO:0003723">
    <property type="term" value="F:RNA binding"/>
    <property type="evidence" value="ECO:0007669"/>
    <property type="project" value="UniProtKB-UniRule"/>
</dbReference>
<dbReference type="GO" id="GO:0070929">
    <property type="term" value="P:trans-translation"/>
    <property type="evidence" value="ECO:0007669"/>
    <property type="project" value="UniProtKB-UniRule"/>
</dbReference>
<dbReference type="CDD" id="cd09294">
    <property type="entry name" value="SmpB"/>
    <property type="match status" value="1"/>
</dbReference>
<dbReference type="Gene3D" id="2.40.280.10">
    <property type="match status" value="1"/>
</dbReference>
<dbReference type="HAMAP" id="MF_00023">
    <property type="entry name" value="SmpB"/>
    <property type="match status" value="1"/>
</dbReference>
<dbReference type="InterPro" id="IPR023620">
    <property type="entry name" value="SmpB"/>
</dbReference>
<dbReference type="InterPro" id="IPR000037">
    <property type="entry name" value="SsrA-bd_prot"/>
</dbReference>
<dbReference type="InterPro" id="IPR020081">
    <property type="entry name" value="SsrA-bd_prot_CS"/>
</dbReference>
<dbReference type="NCBIfam" id="NF003843">
    <property type="entry name" value="PRK05422.1"/>
    <property type="match status" value="1"/>
</dbReference>
<dbReference type="NCBIfam" id="TIGR00086">
    <property type="entry name" value="smpB"/>
    <property type="match status" value="1"/>
</dbReference>
<dbReference type="PANTHER" id="PTHR30308:SF2">
    <property type="entry name" value="SSRA-BINDING PROTEIN"/>
    <property type="match status" value="1"/>
</dbReference>
<dbReference type="PANTHER" id="PTHR30308">
    <property type="entry name" value="TMRNA-BINDING COMPONENT OF TRANS-TRANSLATION TAGGING COMPLEX"/>
    <property type="match status" value="1"/>
</dbReference>
<dbReference type="Pfam" id="PF01668">
    <property type="entry name" value="SmpB"/>
    <property type="match status" value="1"/>
</dbReference>
<dbReference type="SUPFAM" id="SSF74982">
    <property type="entry name" value="Small protein B (SmpB)"/>
    <property type="match status" value="1"/>
</dbReference>
<dbReference type="PROSITE" id="PS01317">
    <property type="entry name" value="SSRP"/>
    <property type="match status" value="1"/>
</dbReference>
<reference key="1">
    <citation type="journal article" date="2003" name="Genome Res.">
        <title>Comparative genome analysis of Vibrio vulnificus, a marine pathogen.</title>
        <authorList>
            <person name="Chen C.-Y."/>
            <person name="Wu K.-M."/>
            <person name="Chang Y.-C."/>
            <person name="Chang C.-H."/>
            <person name="Tsai H.-C."/>
            <person name="Liao T.-L."/>
            <person name="Liu Y.-M."/>
            <person name="Chen H.-J."/>
            <person name="Shen A.B.-T."/>
            <person name="Li J.-C."/>
            <person name="Su T.-L."/>
            <person name="Shao C.-P."/>
            <person name="Lee C.-T."/>
            <person name="Hor L.-I."/>
            <person name="Tsai S.-F."/>
        </authorList>
    </citation>
    <scope>NUCLEOTIDE SEQUENCE [LARGE SCALE GENOMIC DNA]</scope>
    <source>
        <strain>YJ016</strain>
    </source>
</reference>
<name>SSRP_VIBVY</name>
<keyword id="KW-0963">Cytoplasm</keyword>
<keyword id="KW-0694">RNA-binding</keyword>
<feature type="chain" id="PRO_0000103067" description="SsrA-binding protein">
    <location>
        <begin position="1"/>
        <end position="161"/>
    </location>
</feature>
<evidence type="ECO:0000255" key="1">
    <source>
        <dbReference type="HAMAP-Rule" id="MF_00023"/>
    </source>
</evidence>
<gene>
    <name evidence="1" type="primary">smpB</name>
    <name type="ordered locus">VV0818</name>
</gene>
<organism>
    <name type="scientific">Vibrio vulnificus (strain YJ016)</name>
    <dbReference type="NCBI Taxonomy" id="196600"/>
    <lineage>
        <taxon>Bacteria</taxon>
        <taxon>Pseudomonadati</taxon>
        <taxon>Pseudomonadota</taxon>
        <taxon>Gammaproteobacteria</taxon>
        <taxon>Vibrionales</taxon>
        <taxon>Vibrionaceae</taxon>
        <taxon>Vibrio</taxon>
    </lineage>
</organism>
<protein>
    <recommendedName>
        <fullName evidence="1">SsrA-binding protein</fullName>
    </recommendedName>
    <alternativeName>
        <fullName evidence="1">Small protein B</fullName>
    </alternativeName>
</protein>
<accession>Q7MN99</accession>
<proteinExistence type="inferred from homology"/>
<comment type="function">
    <text evidence="1">Required for rescue of stalled ribosomes mediated by trans-translation. Binds to transfer-messenger RNA (tmRNA), required for stable association of tmRNA with ribosomes. tmRNA and SmpB together mimic tRNA shape, replacing the anticodon stem-loop with SmpB. tmRNA is encoded by the ssrA gene; the 2 termini fold to resemble tRNA(Ala) and it encodes a 'tag peptide', a short internal open reading frame. During trans-translation Ala-aminoacylated tmRNA acts like a tRNA, entering the A-site of stalled ribosomes, displacing the stalled mRNA. The ribosome then switches to translate the ORF on the tmRNA; the nascent peptide is terminated with the 'tag peptide' encoded by the tmRNA and targeted for degradation. The ribosome is freed to recommence translation, which seems to be the essential function of trans-translation.</text>
</comment>
<comment type="subcellular location">
    <subcellularLocation>
        <location evidence="1">Cytoplasm</location>
    </subcellularLocation>
    <text evidence="1">The tmRNA-SmpB complex associates with stalled 70S ribosomes.</text>
</comment>
<comment type="similarity">
    <text evidence="1">Belongs to the SmpB family.</text>
</comment>
<sequence length="161" mass="18426">MAKKNSKPKAGSNTIALNKKARHEYFIEDEIEAGMELQGWEVKALRQGKANISESYVFMRDGEAFVSGMTITPLNQASTHVVANPTRVRKLLMSRRELDNLLGRINREGMTLAALSLYWARSWVKIKIGVAKGKKLHDKRDDIKDRDWQRQKARVMKSSLR</sequence>